<sequence length="419" mass="46440">MAALCGGMLRGCILKPLGLSGSLQLKRNVRALRRTPVRVIQADEEGRERKQVEASRQRQPRQNESQACKAVGVSPATVDIEAPAHEFRYERALPGDKRLSKVVTIAKSKKFRDRHGQVLLEGQRLLTDALDSGAVLQTLFFSRVDYLKEFPPDKLRKTNLIKVNFENIKIWSDLVTPQGLMGIFAKPDHVKMTYPDTQTKHTLPLSLICDNIRDPGNLGTILRCAAGAGCSKVLLTKGCVDAWEPKVLRAGMGAHFRLPIITSLDWDIVPNYLPAGTKVFLADNFRPDNQNKPAEVSEKASDYGWVATDPKRIFITEDGYESSSDEEDNTDKLYIPGLEVQSYFERWAQGPCAVVIGGETHGLSIESLLLAEKSNGKRLNIPVVPGIDSLNSAMAASILLFEGKRQIENTMKRKSCVTE</sequence>
<protein>
    <recommendedName>
        <fullName evidence="2">rRNA methyltransferase 3, mitochondrial</fullName>
        <ecNumber evidence="2">2.1.1.-</ecNumber>
    </recommendedName>
    <alternativeName>
        <fullName evidence="2">RNA methyltransferase-like protein 1</fullName>
    </alternativeName>
    <alternativeName>
        <fullName evidence="2">rRNA (guanosine-2'-O)-methyltransferase</fullName>
    </alternativeName>
</protein>
<evidence type="ECO:0000250" key="1"/>
<evidence type="ECO:0000250" key="2">
    <source>
        <dbReference type="UniProtKB" id="Q9HC36"/>
    </source>
</evidence>
<evidence type="ECO:0000255" key="3"/>
<evidence type="ECO:0000256" key="4">
    <source>
        <dbReference type="SAM" id="MobiDB-lite"/>
    </source>
</evidence>
<evidence type="ECO:0000305" key="5"/>
<accession>Q6GPJ4</accession>
<reference key="1">
    <citation type="submission" date="2004-06" db="EMBL/GenBank/DDBJ databases">
        <authorList>
            <consortium name="NIH - Xenopus Gene Collection (XGC) project"/>
        </authorList>
    </citation>
    <scope>NUCLEOTIDE SEQUENCE [LARGE SCALE MRNA]</scope>
    <source>
        <tissue>Oocyte</tissue>
    </source>
</reference>
<dbReference type="EC" id="2.1.1.-" evidence="2"/>
<dbReference type="EMBL" id="BC073125">
    <property type="protein sequence ID" value="AAH73125.1"/>
    <property type="molecule type" value="mRNA"/>
</dbReference>
<dbReference type="RefSeq" id="NP_001085673.1">
    <property type="nucleotide sequence ID" value="NM_001092204.1"/>
</dbReference>
<dbReference type="SMR" id="Q6GPJ4"/>
<dbReference type="DNASU" id="444099"/>
<dbReference type="GeneID" id="444099"/>
<dbReference type="KEGG" id="xla:444099"/>
<dbReference type="AGR" id="Xenbase:XB-GENE-951940"/>
<dbReference type="CTD" id="444099"/>
<dbReference type="Xenbase" id="XB-GENE-951940">
    <property type="gene designation" value="mrm3.L"/>
</dbReference>
<dbReference type="OMA" id="FLKFHKY"/>
<dbReference type="OrthoDB" id="270651at2759"/>
<dbReference type="Proteomes" id="UP000186698">
    <property type="component" value="Chromosome 2L"/>
</dbReference>
<dbReference type="Bgee" id="444099">
    <property type="expression patterns" value="Expressed in blastula and 19 other cell types or tissues"/>
</dbReference>
<dbReference type="GO" id="GO:0005739">
    <property type="term" value="C:mitochondrion"/>
    <property type="evidence" value="ECO:0007669"/>
    <property type="project" value="UniProtKB-SubCell"/>
</dbReference>
<dbReference type="GO" id="GO:0003723">
    <property type="term" value="F:RNA binding"/>
    <property type="evidence" value="ECO:0007669"/>
    <property type="project" value="InterPro"/>
</dbReference>
<dbReference type="GO" id="GO:0008650">
    <property type="term" value="F:rRNA (uridine-2'-O-)-methyltransferase activity"/>
    <property type="evidence" value="ECO:0007669"/>
    <property type="project" value="RHEA"/>
</dbReference>
<dbReference type="CDD" id="cd18106">
    <property type="entry name" value="SpoU-like_RNMTL1"/>
    <property type="match status" value="1"/>
</dbReference>
<dbReference type="Gene3D" id="3.30.1330.30">
    <property type="match status" value="1"/>
</dbReference>
<dbReference type="Gene3D" id="3.40.1280.10">
    <property type="match status" value="1"/>
</dbReference>
<dbReference type="InterPro" id="IPR029028">
    <property type="entry name" value="Alpha/beta_knot_MTases"/>
</dbReference>
<dbReference type="InterPro" id="IPR053888">
    <property type="entry name" value="MRM3-like_sub_bind"/>
</dbReference>
<dbReference type="InterPro" id="IPR029064">
    <property type="entry name" value="Ribosomal_eL30-like_sf"/>
</dbReference>
<dbReference type="InterPro" id="IPR051259">
    <property type="entry name" value="rRNA_Methyltransferase"/>
</dbReference>
<dbReference type="InterPro" id="IPR001537">
    <property type="entry name" value="SpoU_MeTrfase"/>
</dbReference>
<dbReference type="InterPro" id="IPR013123">
    <property type="entry name" value="SpoU_subst-bd"/>
</dbReference>
<dbReference type="InterPro" id="IPR029026">
    <property type="entry name" value="tRNA_m1G_MTases_N"/>
</dbReference>
<dbReference type="PANTHER" id="PTHR43191">
    <property type="entry name" value="RRNA METHYLTRANSFERASE 3"/>
    <property type="match status" value="1"/>
</dbReference>
<dbReference type="PANTHER" id="PTHR43191:SF2">
    <property type="entry name" value="RRNA METHYLTRANSFERASE 3, MITOCHONDRIAL"/>
    <property type="match status" value="1"/>
</dbReference>
<dbReference type="Pfam" id="PF22435">
    <property type="entry name" value="MRM3-like_sub_bind"/>
    <property type="match status" value="1"/>
</dbReference>
<dbReference type="Pfam" id="PF00588">
    <property type="entry name" value="SpoU_methylase"/>
    <property type="match status" value="1"/>
</dbReference>
<dbReference type="SMART" id="SM00967">
    <property type="entry name" value="SpoU_sub_bind"/>
    <property type="match status" value="1"/>
</dbReference>
<dbReference type="SUPFAM" id="SSF75217">
    <property type="entry name" value="alpha/beta knot"/>
    <property type="match status" value="1"/>
</dbReference>
<dbReference type="SUPFAM" id="SSF55315">
    <property type="entry name" value="L30e-like"/>
    <property type="match status" value="1"/>
</dbReference>
<keyword id="KW-0489">Methyltransferase</keyword>
<keyword id="KW-0496">Mitochondrion</keyword>
<keyword id="KW-1185">Reference proteome</keyword>
<keyword id="KW-0698">rRNA processing</keyword>
<keyword id="KW-0949">S-adenosyl-L-methionine</keyword>
<keyword id="KW-0808">Transferase</keyword>
<keyword id="KW-0809">Transit peptide</keyword>
<organism>
    <name type="scientific">Xenopus laevis</name>
    <name type="common">African clawed frog</name>
    <dbReference type="NCBI Taxonomy" id="8355"/>
    <lineage>
        <taxon>Eukaryota</taxon>
        <taxon>Metazoa</taxon>
        <taxon>Chordata</taxon>
        <taxon>Craniata</taxon>
        <taxon>Vertebrata</taxon>
        <taxon>Euteleostomi</taxon>
        <taxon>Amphibia</taxon>
        <taxon>Batrachia</taxon>
        <taxon>Anura</taxon>
        <taxon>Pipoidea</taxon>
        <taxon>Pipidae</taxon>
        <taxon>Xenopodinae</taxon>
        <taxon>Xenopus</taxon>
        <taxon>Xenopus</taxon>
    </lineage>
</organism>
<feature type="transit peptide" description="Mitochondrion" evidence="3">
    <location>
        <begin position="1"/>
        <end position="39"/>
    </location>
</feature>
<feature type="chain" id="PRO_0000311305" description="rRNA methyltransferase 3, mitochondrial">
    <location>
        <begin position="40"/>
        <end position="419"/>
    </location>
</feature>
<feature type="region of interest" description="Disordered" evidence="4">
    <location>
        <begin position="42"/>
        <end position="68"/>
    </location>
</feature>
<feature type="compositionally biased region" description="Basic and acidic residues" evidence="4">
    <location>
        <begin position="44"/>
        <end position="56"/>
    </location>
</feature>
<feature type="binding site" evidence="1">
    <location>
        <position position="357"/>
    </location>
    <ligand>
        <name>S-adenosyl-L-methionine</name>
        <dbReference type="ChEBI" id="CHEBI:59789"/>
    </ligand>
</feature>
<feature type="binding site" evidence="1">
    <location>
        <position position="381"/>
    </location>
    <ligand>
        <name>S-adenosyl-L-methionine</name>
        <dbReference type="ChEBI" id="CHEBI:59789"/>
    </ligand>
</feature>
<feature type="binding site" evidence="1">
    <location>
        <position position="390"/>
    </location>
    <ligand>
        <name>S-adenosyl-L-methionine</name>
        <dbReference type="ChEBI" id="CHEBI:59789"/>
    </ligand>
</feature>
<proteinExistence type="evidence at transcript level"/>
<comment type="function">
    <text evidence="2">S-adenosyl-L-methionine-dependent 2'-O-ribose methyltransferase that catalyzes the formation of 2'-O-methylguanosine at position 1370 (Gm1370) in the mitochondrial large subunit ribosomal RNA (mtLSU rRNA), a conserved modification in the peptidyl transferase domain of the mtLSU rRNA. Also required for formation of 2'-O-methyluridine at position 1369 (Um1369) mediated by MRM2.</text>
</comment>
<comment type="catalytic activity">
    <reaction evidence="2">
        <text>a uridine in rRNA + S-adenosyl-L-methionine = a 2'-O-methyluridine in rRNA + S-adenosyl-L-homocysteine + H(+)</text>
        <dbReference type="Rhea" id="RHEA:54152"/>
        <dbReference type="Rhea" id="RHEA-COMP:13812"/>
        <dbReference type="Rhea" id="RHEA-COMP:13814"/>
        <dbReference type="ChEBI" id="CHEBI:15378"/>
        <dbReference type="ChEBI" id="CHEBI:57856"/>
        <dbReference type="ChEBI" id="CHEBI:59789"/>
        <dbReference type="ChEBI" id="CHEBI:65315"/>
        <dbReference type="ChEBI" id="CHEBI:74478"/>
    </reaction>
</comment>
<comment type="subcellular location">
    <subcellularLocation>
        <location evidence="2">Mitochondrion</location>
    </subcellularLocation>
</comment>
<comment type="similarity">
    <text evidence="5">Belongs to the class IV-like SAM-binding methyltransferase superfamily. RNA methyltransferase TrmH family.</text>
</comment>
<name>MRM3_XENLA</name>
<gene>
    <name evidence="2" type="primary">mrm3</name>
    <name evidence="2" type="synonym">rnmtl1</name>
</gene>